<reference key="1">
    <citation type="submission" date="2006-10" db="EMBL/GenBank/DDBJ databases">
        <authorList>
            <person name="Fleischmann R.D."/>
            <person name="Dodson R.J."/>
            <person name="Haft D.H."/>
            <person name="Merkel J.S."/>
            <person name="Nelson W.C."/>
            <person name="Fraser C.M."/>
        </authorList>
    </citation>
    <scope>NUCLEOTIDE SEQUENCE [LARGE SCALE GENOMIC DNA]</scope>
    <source>
        <strain>104</strain>
    </source>
</reference>
<protein>
    <recommendedName>
        <fullName evidence="1">ATP phosphoribosyltransferase</fullName>
        <shortName evidence="1">ATP-PRT</shortName>
        <shortName evidence="1">ATP-PRTase</shortName>
        <ecNumber evidence="1">2.4.2.17</ecNumber>
    </recommendedName>
</protein>
<name>HIS1_MYCA1</name>
<sequence length="284" mass="30542">MLRVAVPNKGTLSEPATEILAEAGYRRRTDSKDLTVIDPVNQVEFFFLRPKDIAIYVGSGELDFGITGRDLVGDSDAPVRERLALGFGSSSFRYAGPAGRDWKIADLAGKRIATAYPNLVRKDLAERGIEATVIRLDGAVEISVQLGVADAIADVVGSGRTLSLHNLVAFGEPLCDSEAVLIESDRGGQDDTQAARDQLVARIQGVVFGQQYLMLDYDCPRAVLDKATAITPGLESPTIAPLADADWVAIRALVPRRGVNEIMDELAAIGAKAILASDIRFCRF</sequence>
<feature type="chain" id="PRO_1000004474" description="ATP phosphoribosyltransferase">
    <location>
        <begin position="1"/>
        <end position="284"/>
    </location>
</feature>
<accession>A0QFA5</accession>
<dbReference type="EC" id="2.4.2.17" evidence="1"/>
<dbReference type="EMBL" id="CP000479">
    <property type="protein sequence ID" value="ABK66842.1"/>
    <property type="molecule type" value="Genomic_DNA"/>
</dbReference>
<dbReference type="RefSeq" id="WP_003872173.1">
    <property type="nucleotide sequence ID" value="NC_008595.1"/>
</dbReference>
<dbReference type="SMR" id="A0QFA5"/>
<dbReference type="GeneID" id="75269937"/>
<dbReference type="KEGG" id="mav:MAV_2393"/>
<dbReference type="HOGENOM" id="CLU_038115_1_1_11"/>
<dbReference type="UniPathway" id="UPA00031">
    <property type="reaction ID" value="UER00006"/>
</dbReference>
<dbReference type="Proteomes" id="UP000001574">
    <property type="component" value="Chromosome"/>
</dbReference>
<dbReference type="GO" id="GO:0005737">
    <property type="term" value="C:cytoplasm"/>
    <property type="evidence" value="ECO:0007669"/>
    <property type="project" value="UniProtKB-SubCell"/>
</dbReference>
<dbReference type="GO" id="GO:0005524">
    <property type="term" value="F:ATP binding"/>
    <property type="evidence" value="ECO:0007669"/>
    <property type="project" value="UniProtKB-KW"/>
</dbReference>
<dbReference type="GO" id="GO:0003879">
    <property type="term" value="F:ATP phosphoribosyltransferase activity"/>
    <property type="evidence" value="ECO:0007669"/>
    <property type="project" value="UniProtKB-UniRule"/>
</dbReference>
<dbReference type="GO" id="GO:0000287">
    <property type="term" value="F:magnesium ion binding"/>
    <property type="evidence" value="ECO:0007669"/>
    <property type="project" value="UniProtKB-UniRule"/>
</dbReference>
<dbReference type="GO" id="GO:0000105">
    <property type="term" value="P:L-histidine biosynthetic process"/>
    <property type="evidence" value="ECO:0007669"/>
    <property type="project" value="UniProtKB-UniRule"/>
</dbReference>
<dbReference type="CDD" id="cd13591">
    <property type="entry name" value="PBP2_HisGL1"/>
    <property type="match status" value="1"/>
</dbReference>
<dbReference type="FunFam" id="3.30.70.120:FF:000003">
    <property type="entry name" value="ATP phosphoribosyltransferase"/>
    <property type="match status" value="1"/>
</dbReference>
<dbReference type="FunFam" id="3.40.190.10:FF:000136">
    <property type="entry name" value="ATP phosphoribosyltransferase"/>
    <property type="match status" value="1"/>
</dbReference>
<dbReference type="Gene3D" id="3.30.70.120">
    <property type="match status" value="1"/>
</dbReference>
<dbReference type="Gene3D" id="3.40.190.10">
    <property type="entry name" value="Periplasmic binding protein-like II"/>
    <property type="match status" value="2"/>
</dbReference>
<dbReference type="HAMAP" id="MF_00079">
    <property type="entry name" value="HisG_Long"/>
    <property type="match status" value="1"/>
</dbReference>
<dbReference type="InterPro" id="IPR020621">
    <property type="entry name" value="ATP-PRT_HisG_long"/>
</dbReference>
<dbReference type="InterPro" id="IPR013820">
    <property type="entry name" value="ATP_PRibTrfase_cat"/>
</dbReference>
<dbReference type="InterPro" id="IPR018198">
    <property type="entry name" value="ATP_PRibTrfase_CS"/>
</dbReference>
<dbReference type="InterPro" id="IPR001348">
    <property type="entry name" value="ATP_PRibTrfase_HisG"/>
</dbReference>
<dbReference type="InterPro" id="IPR013115">
    <property type="entry name" value="HisG_C"/>
</dbReference>
<dbReference type="InterPro" id="IPR011322">
    <property type="entry name" value="N-reg_PII-like_a/b"/>
</dbReference>
<dbReference type="InterPro" id="IPR015867">
    <property type="entry name" value="N-reg_PII/ATP_PRibTrfase_C"/>
</dbReference>
<dbReference type="NCBIfam" id="TIGR00070">
    <property type="entry name" value="hisG"/>
    <property type="match status" value="1"/>
</dbReference>
<dbReference type="NCBIfam" id="TIGR03455">
    <property type="entry name" value="HisG_C-term"/>
    <property type="match status" value="1"/>
</dbReference>
<dbReference type="PANTHER" id="PTHR21403:SF8">
    <property type="entry name" value="ATP PHOSPHORIBOSYLTRANSFERASE"/>
    <property type="match status" value="1"/>
</dbReference>
<dbReference type="PANTHER" id="PTHR21403">
    <property type="entry name" value="ATP PHOSPHORIBOSYLTRANSFERASE ATP-PRTASE"/>
    <property type="match status" value="1"/>
</dbReference>
<dbReference type="Pfam" id="PF01634">
    <property type="entry name" value="HisG"/>
    <property type="match status" value="1"/>
</dbReference>
<dbReference type="Pfam" id="PF08029">
    <property type="entry name" value="HisG_C"/>
    <property type="match status" value="1"/>
</dbReference>
<dbReference type="SUPFAM" id="SSF54913">
    <property type="entry name" value="GlnB-like"/>
    <property type="match status" value="1"/>
</dbReference>
<dbReference type="SUPFAM" id="SSF53850">
    <property type="entry name" value="Periplasmic binding protein-like II"/>
    <property type="match status" value="1"/>
</dbReference>
<dbReference type="PROSITE" id="PS01316">
    <property type="entry name" value="ATP_P_PHORIBOSYLTR"/>
    <property type="match status" value="1"/>
</dbReference>
<proteinExistence type="inferred from homology"/>
<keyword id="KW-0028">Amino-acid biosynthesis</keyword>
<keyword id="KW-0067">ATP-binding</keyword>
<keyword id="KW-0963">Cytoplasm</keyword>
<keyword id="KW-0328">Glycosyltransferase</keyword>
<keyword id="KW-0368">Histidine biosynthesis</keyword>
<keyword id="KW-0460">Magnesium</keyword>
<keyword id="KW-0479">Metal-binding</keyword>
<keyword id="KW-0547">Nucleotide-binding</keyword>
<keyword id="KW-0808">Transferase</keyword>
<comment type="function">
    <text evidence="1">Catalyzes the condensation of ATP and 5-phosphoribose 1-diphosphate to form N'-(5'-phosphoribosyl)-ATP (PR-ATP). Has a crucial role in the pathway because the rate of histidine biosynthesis seems to be controlled primarily by regulation of HisG enzymatic activity.</text>
</comment>
<comment type="catalytic activity">
    <reaction evidence="1">
        <text>1-(5-phospho-beta-D-ribosyl)-ATP + diphosphate = 5-phospho-alpha-D-ribose 1-diphosphate + ATP</text>
        <dbReference type="Rhea" id="RHEA:18473"/>
        <dbReference type="ChEBI" id="CHEBI:30616"/>
        <dbReference type="ChEBI" id="CHEBI:33019"/>
        <dbReference type="ChEBI" id="CHEBI:58017"/>
        <dbReference type="ChEBI" id="CHEBI:73183"/>
        <dbReference type="EC" id="2.4.2.17"/>
    </reaction>
</comment>
<comment type="cofactor">
    <cofactor evidence="1">
        <name>Mg(2+)</name>
        <dbReference type="ChEBI" id="CHEBI:18420"/>
    </cofactor>
</comment>
<comment type="activity regulation">
    <text evidence="1">Feedback inhibited by histidine.</text>
</comment>
<comment type="pathway">
    <text evidence="1">Amino-acid biosynthesis; L-histidine biosynthesis; L-histidine from 5-phospho-alpha-D-ribose 1-diphosphate: step 1/9.</text>
</comment>
<comment type="subunit">
    <text evidence="1">Equilibrium between an active dimeric form, an inactive hexameric form and higher aggregates. Interconversion between the various forms is largely reversible and is influenced by the natural substrates and inhibitors of the enzyme.</text>
</comment>
<comment type="subcellular location">
    <subcellularLocation>
        <location evidence="1">Cytoplasm</location>
    </subcellularLocation>
</comment>
<comment type="similarity">
    <text evidence="1">Belongs to the ATP phosphoribosyltransferase family. Long subfamily.</text>
</comment>
<organism>
    <name type="scientific">Mycobacterium avium (strain 104)</name>
    <dbReference type="NCBI Taxonomy" id="243243"/>
    <lineage>
        <taxon>Bacteria</taxon>
        <taxon>Bacillati</taxon>
        <taxon>Actinomycetota</taxon>
        <taxon>Actinomycetes</taxon>
        <taxon>Mycobacteriales</taxon>
        <taxon>Mycobacteriaceae</taxon>
        <taxon>Mycobacterium</taxon>
        <taxon>Mycobacterium avium complex (MAC)</taxon>
    </lineage>
</organism>
<gene>
    <name evidence="1" type="primary">hisG</name>
    <name type="ordered locus">MAV_2393</name>
</gene>
<evidence type="ECO:0000255" key="1">
    <source>
        <dbReference type="HAMAP-Rule" id="MF_00079"/>
    </source>
</evidence>